<evidence type="ECO:0000255" key="1">
    <source>
        <dbReference type="HAMAP-Rule" id="MF_00251"/>
    </source>
</evidence>
<evidence type="ECO:0000256" key="2">
    <source>
        <dbReference type="SAM" id="MobiDB-lite"/>
    </source>
</evidence>
<evidence type="ECO:0000305" key="3"/>
<dbReference type="EMBL" id="CR848038">
    <property type="protein sequence ID" value="CAH64245.1"/>
    <property type="molecule type" value="Genomic_DNA"/>
</dbReference>
<dbReference type="RefSeq" id="WP_006344409.1">
    <property type="nucleotide sequence ID" value="NC_004552.2"/>
</dbReference>
<dbReference type="SMR" id="Q5L549"/>
<dbReference type="GeneID" id="93024356"/>
<dbReference type="KEGG" id="cab:CAB803"/>
<dbReference type="eggNOG" id="COG0257">
    <property type="taxonomic scope" value="Bacteria"/>
</dbReference>
<dbReference type="HOGENOM" id="CLU_135723_3_3_0"/>
<dbReference type="OrthoDB" id="9801558at2"/>
<dbReference type="Proteomes" id="UP000001012">
    <property type="component" value="Chromosome"/>
</dbReference>
<dbReference type="GO" id="GO:1990904">
    <property type="term" value="C:ribonucleoprotein complex"/>
    <property type="evidence" value="ECO:0007669"/>
    <property type="project" value="UniProtKB-KW"/>
</dbReference>
<dbReference type="GO" id="GO:0005840">
    <property type="term" value="C:ribosome"/>
    <property type="evidence" value="ECO:0007669"/>
    <property type="project" value="UniProtKB-KW"/>
</dbReference>
<dbReference type="GO" id="GO:0003735">
    <property type="term" value="F:structural constituent of ribosome"/>
    <property type="evidence" value="ECO:0007669"/>
    <property type="project" value="InterPro"/>
</dbReference>
<dbReference type="GO" id="GO:0006412">
    <property type="term" value="P:translation"/>
    <property type="evidence" value="ECO:0007669"/>
    <property type="project" value="UniProtKB-UniRule"/>
</dbReference>
<dbReference type="HAMAP" id="MF_00251">
    <property type="entry name" value="Ribosomal_bL36"/>
    <property type="match status" value="1"/>
</dbReference>
<dbReference type="InterPro" id="IPR000473">
    <property type="entry name" value="Ribosomal_bL36"/>
</dbReference>
<dbReference type="InterPro" id="IPR035977">
    <property type="entry name" value="Ribosomal_bL36_sp"/>
</dbReference>
<dbReference type="NCBIfam" id="TIGR01022">
    <property type="entry name" value="rpmJ_bact"/>
    <property type="match status" value="1"/>
</dbReference>
<dbReference type="Pfam" id="PF00444">
    <property type="entry name" value="Ribosomal_L36"/>
    <property type="match status" value="1"/>
</dbReference>
<dbReference type="SUPFAM" id="SSF57840">
    <property type="entry name" value="Ribosomal protein L36"/>
    <property type="match status" value="1"/>
</dbReference>
<dbReference type="PROSITE" id="PS00828">
    <property type="entry name" value="RIBOSOMAL_L36"/>
    <property type="match status" value="1"/>
</dbReference>
<sequence>MKVSSSIKADPSKGDKLVRRKGRLYVINKIDPNRKQRQAGPARKK</sequence>
<organism>
    <name type="scientific">Chlamydia abortus (strain DSM 27085 / S26/3)</name>
    <name type="common">Chlamydophila abortus</name>
    <dbReference type="NCBI Taxonomy" id="218497"/>
    <lineage>
        <taxon>Bacteria</taxon>
        <taxon>Pseudomonadati</taxon>
        <taxon>Chlamydiota</taxon>
        <taxon>Chlamydiia</taxon>
        <taxon>Chlamydiales</taxon>
        <taxon>Chlamydiaceae</taxon>
        <taxon>Chlamydia/Chlamydophila group</taxon>
        <taxon>Chlamydia</taxon>
    </lineage>
</organism>
<comment type="similarity">
    <text evidence="1">Belongs to the bacterial ribosomal protein bL36 family.</text>
</comment>
<gene>
    <name evidence="1" type="primary">rpmJ</name>
    <name type="ordered locus">CAB803</name>
</gene>
<protein>
    <recommendedName>
        <fullName evidence="1">Large ribosomal subunit protein bL36</fullName>
    </recommendedName>
    <alternativeName>
        <fullName evidence="3">50S ribosomal protein L36</fullName>
    </alternativeName>
</protein>
<proteinExistence type="inferred from homology"/>
<name>RL36_CHLAB</name>
<reference key="1">
    <citation type="journal article" date="2005" name="Genome Res.">
        <title>The Chlamydophila abortus genome sequence reveals an array of variable proteins that contribute to interspecies variation.</title>
        <authorList>
            <person name="Thomson N.R."/>
            <person name="Yeats C."/>
            <person name="Bell K."/>
            <person name="Holden M.T.G."/>
            <person name="Bentley S.D."/>
            <person name="Livingstone M."/>
            <person name="Cerdeno-Tarraga A.-M."/>
            <person name="Harris B."/>
            <person name="Doggett J."/>
            <person name="Ormond D."/>
            <person name="Mungall K."/>
            <person name="Clarke K."/>
            <person name="Feltwell T."/>
            <person name="Hance Z."/>
            <person name="Sanders M."/>
            <person name="Quail M.A."/>
            <person name="Price C."/>
            <person name="Barrell B.G."/>
            <person name="Parkhill J."/>
            <person name="Longbottom D."/>
        </authorList>
    </citation>
    <scope>NUCLEOTIDE SEQUENCE [LARGE SCALE GENOMIC DNA]</scope>
    <source>
        <strain>DSM 27085 / S26/3</strain>
    </source>
</reference>
<feature type="chain" id="PRO_0000302179" description="Large ribosomal subunit protein bL36">
    <location>
        <begin position="1"/>
        <end position="45"/>
    </location>
</feature>
<feature type="region of interest" description="Disordered" evidence="2">
    <location>
        <begin position="1"/>
        <end position="20"/>
    </location>
</feature>
<keyword id="KW-0687">Ribonucleoprotein</keyword>
<keyword id="KW-0689">Ribosomal protein</keyword>
<accession>Q5L549</accession>